<sequence>MMNFRQRMGWIGVSLYLFVSAAAFYYVFEINETYNRLALEHVQLKPHEPHRGTTWTHSLKIRLLSLPFWLWAALFLIPYFQVFLFLYSCTRADPKTVGYCIIPICLAIICNRHQSFVKASNRISKLQLIDT</sequence>
<feature type="chain" id="PRO_0000359887" description="Lysosomal enzyme trafficking factor">
    <location>
        <begin position="1"/>
        <end position="131"/>
    </location>
</feature>
<feature type="transmembrane region" description="Helical" evidence="2">
    <location>
        <begin position="8"/>
        <end position="28"/>
    </location>
</feature>
<feature type="transmembrane region" description="Helical" evidence="2">
    <location>
        <begin position="66"/>
        <end position="86"/>
    </location>
</feature>
<reference key="1">
    <citation type="submission" date="2004-06" db="EMBL/GenBank/DDBJ databases">
        <authorList>
            <consortium name="NIH - Xenopus Gene Collection (XGC) project"/>
        </authorList>
    </citation>
    <scope>NUCLEOTIDE SEQUENCE [LARGE SCALE MRNA]</scope>
    <source>
        <tissue>Eye</tissue>
    </source>
</reference>
<dbReference type="EMBL" id="BC074294">
    <property type="protein sequence ID" value="AAH74294.1"/>
    <property type="status" value="ALT_INIT"/>
    <property type="molecule type" value="mRNA"/>
</dbReference>
<dbReference type="RefSeq" id="NP_001086179.1">
    <property type="nucleotide sequence ID" value="NM_001092710.1"/>
</dbReference>
<dbReference type="DNASU" id="444608"/>
<dbReference type="GeneID" id="444608"/>
<dbReference type="KEGG" id="xla:444608"/>
<dbReference type="CTD" id="444608"/>
<dbReference type="OMA" id="CIFPIYL"/>
<dbReference type="OrthoDB" id="6273523at2759"/>
<dbReference type="Proteomes" id="UP000186698">
    <property type="component" value="Chromosome 8S"/>
</dbReference>
<dbReference type="Bgee" id="444608">
    <property type="expression patterns" value="Expressed in egg cell and 19 other cell types or tissues"/>
</dbReference>
<dbReference type="GO" id="GO:0005794">
    <property type="term" value="C:Golgi apparatus"/>
    <property type="evidence" value="ECO:0000250"/>
    <property type="project" value="UniProtKB"/>
</dbReference>
<dbReference type="GO" id="GO:0000139">
    <property type="term" value="C:Golgi membrane"/>
    <property type="evidence" value="ECO:0007669"/>
    <property type="project" value="UniProtKB-SubCell"/>
</dbReference>
<dbReference type="GO" id="GO:0007040">
    <property type="term" value="P:lysosome organization"/>
    <property type="evidence" value="ECO:0000250"/>
    <property type="project" value="UniProtKB"/>
</dbReference>
<dbReference type="GO" id="GO:0060627">
    <property type="term" value="P:regulation of vesicle-mediated transport"/>
    <property type="evidence" value="ECO:0000250"/>
    <property type="project" value="UniProtKB"/>
</dbReference>
<dbReference type="InterPro" id="IPR028024">
    <property type="entry name" value="LYSET"/>
</dbReference>
<dbReference type="PANTHER" id="PTHR31925:SF1">
    <property type="entry name" value="LYSOSOMAL ENZYME TRAFFICKING FACTOR"/>
    <property type="match status" value="1"/>
</dbReference>
<dbReference type="PANTHER" id="PTHR31925">
    <property type="entry name" value="TRANSMEMBRANE PROTEIN 251"/>
    <property type="match status" value="1"/>
</dbReference>
<dbReference type="Pfam" id="PF15190">
    <property type="entry name" value="TMEM251"/>
    <property type="match status" value="1"/>
</dbReference>
<organism>
    <name type="scientific">Xenopus laevis</name>
    <name type="common">African clawed frog</name>
    <dbReference type="NCBI Taxonomy" id="8355"/>
    <lineage>
        <taxon>Eukaryota</taxon>
        <taxon>Metazoa</taxon>
        <taxon>Chordata</taxon>
        <taxon>Craniata</taxon>
        <taxon>Vertebrata</taxon>
        <taxon>Euteleostomi</taxon>
        <taxon>Amphibia</taxon>
        <taxon>Batrachia</taxon>
        <taxon>Anura</taxon>
        <taxon>Pipoidea</taxon>
        <taxon>Pipidae</taxon>
        <taxon>Xenopodinae</taxon>
        <taxon>Xenopus</taxon>
        <taxon>Xenopus</taxon>
    </lineage>
</organism>
<protein>
    <recommendedName>
        <fullName>Lysosomal enzyme trafficking factor</fullName>
    </recommendedName>
    <alternativeName>
        <fullName>Transmembrane protein 251</fullName>
    </alternativeName>
    <alternativeName>
        <fullName>Transmembrane protein 251-B</fullName>
    </alternativeName>
</protein>
<comment type="function">
    <text evidence="1">Required for mannose-6-phosphate-dependent trafficking of lysosomal enzymes. LYSET bridges GlcNAc-1-phosphate transferase (GNPTAB), to the membrane-bound transcription factor site-1 protease (MBTPS1), thus allowing proteolytic activation of the GNPTAB. GNPTAB is involved in the regulation of M6P-dependent Golgi-to-lysosome trafficking of lysosomal enzymes. LYSET is thus an essential factor for maturation and delivery of lysosomal hydrolases.</text>
</comment>
<comment type="subcellular location">
    <subcellularLocation>
        <location evidence="1">Golgi apparatus membrane</location>
        <topology evidence="2">Multi-pass membrane protein</topology>
    </subcellularLocation>
</comment>
<comment type="similarity">
    <text evidence="3">Belongs to the LYSET family.</text>
</comment>
<comment type="sequence caution" evidence="3">
    <conflict type="erroneous initiation">
        <sequence resource="EMBL-CDS" id="AAH74294"/>
    </conflict>
    <text>Truncated N-terminus.</text>
</comment>
<evidence type="ECO:0000250" key="1">
    <source>
        <dbReference type="UniProtKB" id="Q8N6I4"/>
    </source>
</evidence>
<evidence type="ECO:0000255" key="2"/>
<evidence type="ECO:0000305" key="3"/>
<keyword id="KW-0333">Golgi apparatus</keyword>
<keyword id="KW-0472">Membrane</keyword>
<keyword id="KW-1185">Reference proteome</keyword>
<keyword id="KW-0812">Transmembrane</keyword>
<keyword id="KW-1133">Transmembrane helix</keyword>
<accession>Q6GLZ9</accession>
<gene>
    <name type="primary">lyset-b</name>
    <name type="synonym">C14orf109</name>
    <name type="synonym">tmem251-b</name>
</gene>
<name>LYETB_XENLA</name>
<proteinExistence type="evidence at transcript level"/>